<keyword id="KW-0413">Isomerase</keyword>
<keyword id="KW-0460">Magnesium</keyword>
<keyword id="KW-0479">Metal-binding</keyword>
<keyword id="KW-0597">Phosphoprotein</keyword>
<keyword id="KW-1185">Reference proteome</keyword>
<comment type="function">
    <text evidence="1">Catalyzes the conversion of glucosamine-6-phosphate to glucosamine-1-phosphate.</text>
</comment>
<comment type="catalytic activity">
    <reaction evidence="1">
        <text>alpha-D-glucosamine 1-phosphate = D-glucosamine 6-phosphate</text>
        <dbReference type="Rhea" id="RHEA:23424"/>
        <dbReference type="ChEBI" id="CHEBI:58516"/>
        <dbReference type="ChEBI" id="CHEBI:58725"/>
        <dbReference type="EC" id="5.4.2.10"/>
    </reaction>
</comment>
<comment type="cofactor">
    <cofactor evidence="1">
        <name>Mg(2+)</name>
        <dbReference type="ChEBI" id="CHEBI:18420"/>
    </cofactor>
    <text evidence="1">Binds 1 Mg(2+) ion per subunit.</text>
</comment>
<comment type="PTM">
    <text evidence="1">Activated by phosphorylation.</text>
</comment>
<comment type="similarity">
    <text evidence="1">Belongs to the phosphohexose mutase family.</text>
</comment>
<accession>Q2RVE4</accession>
<evidence type="ECO:0000255" key="1">
    <source>
        <dbReference type="HAMAP-Rule" id="MF_01554"/>
    </source>
</evidence>
<gene>
    <name evidence="1" type="primary">glmM</name>
    <name type="ordered locus">Rru_A1100</name>
</gene>
<sequence length="452" mass="47840">MAKRTLFGTDGVRGTANREPMTADTALRIGMAAGHLLRNGDHRHTVVIGKDTRLSGYMLEPALAAGFISVGMDVVLLGPLPTPAVAMLTRSLRADLGVMITASHNPFQDNGIKLFGPDGYKLSDDQEATIEALLDNGLEGHRAGPTALGKARRLDDCNGRYVEFVKSTFPRGRRLEGLRIVVDCAHGAAYRVAPKVLWELGATIVPIGVTPDGTNINKDCGSLHSRVMCETVVREGADLGVALDGDADRVVLCDEKGALVDGDQLLALIGRNWKRAGTLQGGGVVATVMSNLGLERFLKDEGLALARTPVGDRYVVEHMRAEGYNLGGEQSGHIVMSDFGTTGDGLMAALQVLSALVAEDRPASEVLDVFTPLPQLLRNVRVAGHDPRAILADPQVARAVSAGEGRLNGGGRLLIRKSGTEPLIRVMAEGEDEALVAQVVGDICAVIETASQ</sequence>
<dbReference type="EC" id="5.4.2.10" evidence="1"/>
<dbReference type="EMBL" id="CP000230">
    <property type="protein sequence ID" value="ABC21901.1"/>
    <property type="molecule type" value="Genomic_DNA"/>
</dbReference>
<dbReference type="RefSeq" id="WP_011388855.1">
    <property type="nucleotide sequence ID" value="NC_007643.1"/>
</dbReference>
<dbReference type="RefSeq" id="YP_426188.1">
    <property type="nucleotide sequence ID" value="NC_007643.1"/>
</dbReference>
<dbReference type="SMR" id="Q2RVE4"/>
<dbReference type="STRING" id="269796.Rru_A1100"/>
<dbReference type="EnsemblBacteria" id="ABC21901">
    <property type="protein sequence ID" value="ABC21901"/>
    <property type="gene ID" value="Rru_A1100"/>
</dbReference>
<dbReference type="KEGG" id="rru:Rru_A1100"/>
<dbReference type="PATRIC" id="fig|269796.9.peg.1158"/>
<dbReference type="eggNOG" id="COG1109">
    <property type="taxonomic scope" value="Bacteria"/>
</dbReference>
<dbReference type="HOGENOM" id="CLU_016950_7_0_5"/>
<dbReference type="PhylomeDB" id="Q2RVE4"/>
<dbReference type="Proteomes" id="UP000001929">
    <property type="component" value="Chromosome"/>
</dbReference>
<dbReference type="GO" id="GO:0005829">
    <property type="term" value="C:cytosol"/>
    <property type="evidence" value="ECO:0007669"/>
    <property type="project" value="TreeGrafter"/>
</dbReference>
<dbReference type="GO" id="GO:0000287">
    <property type="term" value="F:magnesium ion binding"/>
    <property type="evidence" value="ECO:0007669"/>
    <property type="project" value="UniProtKB-UniRule"/>
</dbReference>
<dbReference type="GO" id="GO:0008966">
    <property type="term" value="F:phosphoglucosamine mutase activity"/>
    <property type="evidence" value="ECO:0007669"/>
    <property type="project" value="UniProtKB-UniRule"/>
</dbReference>
<dbReference type="GO" id="GO:0004615">
    <property type="term" value="F:phosphomannomutase activity"/>
    <property type="evidence" value="ECO:0007669"/>
    <property type="project" value="TreeGrafter"/>
</dbReference>
<dbReference type="GO" id="GO:0005975">
    <property type="term" value="P:carbohydrate metabolic process"/>
    <property type="evidence" value="ECO:0007669"/>
    <property type="project" value="InterPro"/>
</dbReference>
<dbReference type="GO" id="GO:0009252">
    <property type="term" value="P:peptidoglycan biosynthetic process"/>
    <property type="evidence" value="ECO:0007669"/>
    <property type="project" value="TreeGrafter"/>
</dbReference>
<dbReference type="GO" id="GO:0006048">
    <property type="term" value="P:UDP-N-acetylglucosamine biosynthetic process"/>
    <property type="evidence" value="ECO:0007669"/>
    <property type="project" value="TreeGrafter"/>
</dbReference>
<dbReference type="CDD" id="cd05802">
    <property type="entry name" value="GlmM"/>
    <property type="match status" value="1"/>
</dbReference>
<dbReference type="FunFam" id="3.30.310.50:FF:000001">
    <property type="entry name" value="Phosphoglucosamine mutase"/>
    <property type="match status" value="1"/>
</dbReference>
<dbReference type="FunFam" id="3.40.120.10:FF:000001">
    <property type="entry name" value="Phosphoglucosamine mutase"/>
    <property type="match status" value="1"/>
</dbReference>
<dbReference type="FunFam" id="3.40.120.10:FF:000002">
    <property type="entry name" value="Phosphoglucosamine mutase"/>
    <property type="match status" value="1"/>
</dbReference>
<dbReference type="Gene3D" id="3.40.120.10">
    <property type="entry name" value="Alpha-D-Glucose-1,6-Bisphosphate, subunit A, domain 3"/>
    <property type="match status" value="3"/>
</dbReference>
<dbReference type="Gene3D" id="3.30.310.50">
    <property type="entry name" value="Alpha-D-phosphohexomutase, C-terminal domain"/>
    <property type="match status" value="1"/>
</dbReference>
<dbReference type="HAMAP" id="MF_01554_B">
    <property type="entry name" value="GlmM_B"/>
    <property type="match status" value="1"/>
</dbReference>
<dbReference type="InterPro" id="IPR005844">
    <property type="entry name" value="A-D-PHexomutase_a/b/a-I"/>
</dbReference>
<dbReference type="InterPro" id="IPR016055">
    <property type="entry name" value="A-D-PHexomutase_a/b/a-I/II/III"/>
</dbReference>
<dbReference type="InterPro" id="IPR005845">
    <property type="entry name" value="A-D-PHexomutase_a/b/a-II"/>
</dbReference>
<dbReference type="InterPro" id="IPR005846">
    <property type="entry name" value="A-D-PHexomutase_a/b/a-III"/>
</dbReference>
<dbReference type="InterPro" id="IPR005843">
    <property type="entry name" value="A-D-PHexomutase_C"/>
</dbReference>
<dbReference type="InterPro" id="IPR036900">
    <property type="entry name" value="A-D-PHexomutase_C_sf"/>
</dbReference>
<dbReference type="InterPro" id="IPR016066">
    <property type="entry name" value="A-D-PHexomutase_CS"/>
</dbReference>
<dbReference type="InterPro" id="IPR005841">
    <property type="entry name" value="Alpha-D-phosphohexomutase_SF"/>
</dbReference>
<dbReference type="InterPro" id="IPR006352">
    <property type="entry name" value="GlmM_bact"/>
</dbReference>
<dbReference type="InterPro" id="IPR050060">
    <property type="entry name" value="Phosphoglucosamine_mutase"/>
</dbReference>
<dbReference type="NCBIfam" id="TIGR01455">
    <property type="entry name" value="glmM"/>
    <property type="match status" value="1"/>
</dbReference>
<dbReference type="NCBIfam" id="NF008139">
    <property type="entry name" value="PRK10887.1"/>
    <property type="match status" value="1"/>
</dbReference>
<dbReference type="PANTHER" id="PTHR42946:SF1">
    <property type="entry name" value="PHOSPHOGLUCOMUTASE (ALPHA-D-GLUCOSE-1,6-BISPHOSPHATE-DEPENDENT)"/>
    <property type="match status" value="1"/>
</dbReference>
<dbReference type="PANTHER" id="PTHR42946">
    <property type="entry name" value="PHOSPHOHEXOSE MUTASE"/>
    <property type="match status" value="1"/>
</dbReference>
<dbReference type="Pfam" id="PF02878">
    <property type="entry name" value="PGM_PMM_I"/>
    <property type="match status" value="1"/>
</dbReference>
<dbReference type="Pfam" id="PF02879">
    <property type="entry name" value="PGM_PMM_II"/>
    <property type="match status" value="1"/>
</dbReference>
<dbReference type="Pfam" id="PF02880">
    <property type="entry name" value="PGM_PMM_III"/>
    <property type="match status" value="1"/>
</dbReference>
<dbReference type="Pfam" id="PF00408">
    <property type="entry name" value="PGM_PMM_IV"/>
    <property type="match status" value="1"/>
</dbReference>
<dbReference type="PRINTS" id="PR00509">
    <property type="entry name" value="PGMPMM"/>
</dbReference>
<dbReference type="SUPFAM" id="SSF55957">
    <property type="entry name" value="Phosphoglucomutase, C-terminal domain"/>
    <property type="match status" value="1"/>
</dbReference>
<dbReference type="SUPFAM" id="SSF53738">
    <property type="entry name" value="Phosphoglucomutase, first 3 domains"/>
    <property type="match status" value="3"/>
</dbReference>
<dbReference type="PROSITE" id="PS00710">
    <property type="entry name" value="PGM_PMM"/>
    <property type="match status" value="1"/>
</dbReference>
<proteinExistence type="inferred from homology"/>
<organism>
    <name type="scientific">Rhodospirillum rubrum (strain ATCC 11170 / ATH 1.1.1 / DSM 467 / LMG 4362 / NCIMB 8255 / S1)</name>
    <dbReference type="NCBI Taxonomy" id="269796"/>
    <lineage>
        <taxon>Bacteria</taxon>
        <taxon>Pseudomonadati</taxon>
        <taxon>Pseudomonadota</taxon>
        <taxon>Alphaproteobacteria</taxon>
        <taxon>Rhodospirillales</taxon>
        <taxon>Rhodospirillaceae</taxon>
        <taxon>Rhodospirillum</taxon>
    </lineage>
</organism>
<reference key="1">
    <citation type="journal article" date="2011" name="Stand. Genomic Sci.">
        <title>Complete genome sequence of Rhodospirillum rubrum type strain (S1).</title>
        <authorList>
            <person name="Munk A.C."/>
            <person name="Copeland A."/>
            <person name="Lucas S."/>
            <person name="Lapidus A."/>
            <person name="Del Rio T.G."/>
            <person name="Barry K."/>
            <person name="Detter J.C."/>
            <person name="Hammon N."/>
            <person name="Israni S."/>
            <person name="Pitluck S."/>
            <person name="Brettin T."/>
            <person name="Bruce D."/>
            <person name="Han C."/>
            <person name="Tapia R."/>
            <person name="Gilna P."/>
            <person name="Schmutz J."/>
            <person name="Larimer F."/>
            <person name="Land M."/>
            <person name="Kyrpides N.C."/>
            <person name="Mavromatis K."/>
            <person name="Richardson P."/>
            <person name="Rohde M."/>
            <person name="Goeker M."/>
            <person name="Klenk H.P."/>
            <person name="Zhang Y."/>
            <person name="Roberts G.P."/>
            <person name="Reslewic S."/>
            <person name="Schwartz D.C."/>
        </authorList>
    </citation>
    <scope>NUCLEOTIDE SEQUENCE [LARGE SCALE GENOMIC DNA]</scope>
    <source>
        <strain>ATCC 11170 / ATH 1.1.1 / DSM 467 / LMG 4362 / NCIMB 8255 / S1</strain>
    </source>
</reference>
<feature type="chain" id="PRO_0000301372" description="Phosphoglucosamine mutase">
    <location>
        <begin position="1"/>
        <end position="452"/>
    </location>
</feature>
<feature type="active site" description="Phosphoserine intermediate" evidence="1">
    <location>
        <position position="103"/>
    </location>
</feature>
<feature type="binding site" description="via phosphate group" evidence="1">
    <location>
        <position position="103"/>
    </location>
    <ligand>
        <name>Mg(2+)</name>
        <dbReference type="ChEBI" id="CHEBI:18420"/>
    </ligand>
</feature>
<feature type="binding site" evidence="1">
    <location>
        <position position="244"/>
    </location>
    <ligand>
        <name>Mg(2+)</name>
        <dbReference type="ChEBI" id="CHEBI:18420"/>
    </ligand>
</feature>
<feature type="binding site" evidence="1">
    <location>
        <position position="246"/>
    </location>
    <ligand>
        <name>Mg(2+)</name>
        <dbReference type="ChEBI" id="CHEBI:18420"/>
    </ligand>
</feature>
<feature type="binding site" evidence="1">
    <location>
        <position position="248"/>
    </location>
    <ligand>
        <name>Mg(2+)</name>
        <dbReference type="ChEBI" id="CHEBI:18420"/>
    </ligand>
</feature>
<feature type="modified residue" description="Phosphoserine" evidence="1">
    <location>
        <position position="103"/>
    </location>
</feature>
<name>GLMM_RHORT</name>
<protein>
    <recommendedName>
        <fullName evidence="1">Phosphoglucosamine mutase</fullName>
        <ecNumber evidence="1">5.4.2.10</ecNumber>
    </recommendedName>
</protein>